<proteinExistence type="inferred from homology"/>
<sequence length="252" mass="27121">MLAKRIIPCLDVKEGRVVKGVNFIGLQDVGDPVEIAEAYNEAGADEIVFLDITATHEGRKTIIDVVEKTAAKVFIPLTVGGGISSVKDMYNLLRAGADKVSINSAAVRNPKLIEEGAEHFGSQCIVVAIDARKVAEDKWNVYVNGGRVDTEMDAIEWAKRVVKLGAGEILLTSMDADGTKSGYDLRLTEEISKSVSIPVIASGGCGHTDHIIEVFQKTTVDAALAASIFHYGEATVQSVKRKLRDANVEVRL</sequence>
<keyword id="KW-0028">Amino-acid biosynthesis</keyword>
<keyword id="KW-0963">Cytoplasm</keyword>
<keyword id="KW-0368">Histidine biosynthesis</keyword>
<keyword id="KW-0456">Lyase</keyword>
<accession>B7INA3</accession>
<gene>
    <name evidence="1" type="primary">hisF</name>
    <name type="ordered locus">BCG9842_B3881</name>
</gene>
<name>HIS6_BACC2</name>
<comment type="function">
    <text evidence="1">IGPS catalyzes the conversion of PRFAR and glutamine to IGP, AICAR and glutamate. The HisF subunit catalyzes the cyclization activity that produces IGP and AICAR from PRFAR using the ammonia provided by the HisH subunit.</text>
</comment>
<comment type="catalytic activity">
    <reaction evidence="1">
        <text>5-[(5-phospho-1-deoxy-D-ribulos-1-ylimino)methylamino]-1-(5-phospho-beta-D-ribosyl)imidazole-4-carboxamide + L-glutamine = D-erythro-1-(imidazol-4-yl)glycerol 3-phosphate + 5-amino-1-(5-phospho-beta-D-ribosyl)imidazole-4-carboxamide + L-glutamate + H(+)</text>
        <dbReference type="Rhea" id="RHEA:24793"/>
        <dbReference type="ChEBI" id="CHEBI:15378"/>
        <dbReference type="ChEBI" id="CHEBI:29985"/>
        <dbReference type="ChEBI" id="CHEBI:58278"/>
        <dbReference type="ChEBI" id="CHEBI:58359"/>
        <dbReference type="ChEBI" id="CHEBI:58475"/>
        <dbReference type="ChEBI" id="CHEBI:58525"/>
        <dbReference type="EC" id="4.3.2.10"/>
    </reaction>
</comment>
<comment type="pathway">
    <text evidence="1">Amino-acid biosynthesis; L-histidine biosynthesis; L-histidine from 5-phospho-alpha-D-ribose 1-diphosphate: step 5/9.</text>
</comment>
<comment type="subunit">
    <text evidence="1">Heterodimer of HisH and HisF.</text>
</comment>
<comment type="subcellular location">
    <subcellularLocation>
        <location evidence="1">Cytoplasm</location>
    </subcellularLocation>
</comment>
<comment type="similarity">
    <text evidence="1">Belongs to the HisA/HisF family.</text>
</comment>
<evidence type="ECO:0000255" key="1">
    <source>
        <dbReference type="HAMAP-Rule" id="MF_01013"/>
    </source>
</evidence>
<feature type="chain" id="PRO_1000134965" description="Imidazole glycerol phosphate synthase subunit HisF">
    <location>
        <begin position="1"/>
        <end position="252"/>
    </location>
</feature>
<feature type="active site" evidence="1">
    <location>
        <position position="11"/>
    </location>
</feature>
<feature type="active site" evidence="1">
    <location>
        <position position="130"/>
    </location>
</feature>
<organism>
    <name type="scientific">Bacillus cereus (strain G9842)</name>
    <dbReference type="NCBI Taxonomy" id="405531"/>
    <lineage>
        <taxon>Bacteria</taxon>
        <taxon>Bacillati</taxon>
        <taxon>Bacillota</taxon>
        <taxon>Bacilli</taxon>
        <taxon>Bacillales</taxon>
        <taxon>Bacillaceae</taxon>
        <taxon>Bacillus</taxon>
        <taxon>Bacillus cereus group</taxon>
    </lineage>
</organism>
<reference key="1">
    <citation type="submission" date="2008-10" db="EMBL/GenBank/DDBJ databases">
        <title>Genome sequence of Bacillus cereus G9842.</title>
        <authorList>
            <person name="Dodson R.J."/>
            <person name="Durkin A.S."/>
            <person name="Rosovitz M.J."/>
            <person name="Rasko D.A."/>
            <person name="Hoffmaster A."/>
            <person name="Ravel J."/>
            <person name="Sutton G."/>
        </authorList>
    </citation>
    <scope>NUCLEOTIDE SEQUENCE [LARGE SCALE GENOMIC DNA]</scope>
    <source>
        <strain>G9842</strain>
    </source>
</reference>
<dbReference type="EC" id="4.3.2.10" evidence="1"/>
<dbReference type="EMBL" id="CP001186">
    <property type="protein sequence ID" value="ACK96657.1"/>
    <property type="molecule type" value="Genomic_DNA"/>
</dbReference>
<dbReference type="RefSeq" id="WP_000880105.1">
    <property type="nucleotide sequence ID" value="NC_011772.1"/>
</dbReference>
<dbReference type="SMR" id="B7INA3"/>
<dbReference type="KEGG" id="bcg:BCG9842_B3881"/>
<dbReference type="HOGENOM" id="CLU_048577_4_0_9"/>
<dbReference type="UniPathway" id="UPA00031">
    <property type="reaction ID" value="UER00010"/>
</dbReference>
<dbReference type="Proteomes" id="UP000006744">
    <property type="component" value="Chromosome"/>
</dbReference>
<dbReference type="GO" id="GO:0005737">
    <property type="term" value="C:cytoplasm"/>
    <property type="evidence" value="ECO:0007669"/>
    <property type="project" value="UniProtKB-SubCell"/>
</dbReference>
<dbReference type="GO" id="GO:0000107">
    <property type="term" value="F:imidazoleglycerol-phosphate synthase activity"/>
    <property type="evidence" value="ECO:0007669"/>
    <property type="project" value="UniProtKB-UniRule"/>
</dbReference>
<dbReference type="GO" id="GO:0016829">
    <property type="term" value="F:lyase activity"/>
    <property type="evidence" value="ECO:0007669"/>
    <property type="project" value="UniProtKB-KW"/>
</dbReference>
<dbReference type="GO" id="GO:0000105">
    <property type="term" value="P:L-histidine biosynthetic process"/>
    <property type="evidence" value="ECO:0007669"/>
    <property type="project" value="UniProtKB-UniRule"/>
</dbReference>
<dbReference type="CDD" id="cd04731">
    <property type="entry name" value="HisF"/>
    <property type="match status" value="1"/>
</dbReference>
<dbReference type="FunFam" id="3.20.20.70:FF:000006">
    <property type="entry name" value="Imidazole glycerol phosphate synthase subunit HisF"/>
    <property type="match status" value="1"/>
</dbReference>
<dbReference type="Gene3D" id="3.20.20.70">
    <property type="entry name" value="Aldolase class I"/>
    <property type="match status" value="1"/>
</dbReference>
<dbReference type="HAMAP" id="MF_01013">
    <property type="entry name" value="HisF"/>
    <property type="match status" value="1"/>
</dbReference>
<dbReference type="InterPro" id="IPR013785">
    <property type="entry name" value="Aldolase_TIM"/>
</dbReference>
<dbReference type="InterPro" id="IPR006062">
    <property type="entry name" value="His_biosynth"/>
</dbReference>
<dbReference type="InterPro" id="IPR004651">
    <property type="entry name" value="HisF"/>
</dbReference>
<dbReference type="InterPro" id="IPR050064">
    <property type="entry name" value="IGPS_HisA/HisF"/>
</dbReference>
<dbReference type="InterPro" id="IPR011060">
    <property type="entry name" value="RibuloseP-bd_barrel"/>
</dbReference>
<dbReference type="NCBIfam" id="TIGR00735">
    <property type="entry name" value="hisF"/>
    <property type="match status" value="1"/>
</dbReference>
<dbReference type="PANTHER" id="PTHR21235:SF2">
    <property type="entry name" value="IMIDAZOLE GLYCEROL PHOSPHATE SYNTHASE HISHF"/>
    <property type="match status" value="1"/>
</dbReference>
<dbReference type="PANTHER" id="PTHR21235">
    <property type="entry name" value="IMIDAZOLE GLYCEROL PHOSPHATE SYNTHASE SUBUNIT HISF/H IGP SYNTHASE SUBUNIT HISF/H"/>
    <property type="match status" value="1"/>
</dbReference>
<dbReference type="Pfam" id="PF00977">
    <property type="entry name" value="His_biosynth"/>
    <property type="match status" value="1"/>
</dbReference>
<dbReference type="SUPFAM" id="SSF51366">
    <property type="entry name" value="Ribulose-phoshate binding barrel"/>
    <property type="match status" value="1"/>
</dbReference>
<protein>
    <recommendedName>
        <fullName evidence="1">Imidazole glycerol phosphate synthase subunit HisF</fullName>
        <ecNumber evidence="1">4.3.2.10</ecNumber>
    </recommendedName>
    <alternativeName>
        <fullName evidence="1">IGP synthase cyclase subunit</fullName>
    </alternativeName>
    <alternativeName>
        <fullName evidence="1">IGP synthase subunit HisF</fullName>
    </alternativeName>
    <alternativeName>
        <fullName evidence="1">ImGP synthase subunit HisF</fullName>
        <shortName evidence="1">IGPS subunit HisF</shortName>
    </alternativeName>
</protein>